<feature type="chain" id="PRO_0000384400" description="THO complex subunit 2">
    <location>
        <begin position="1"/>
        <end position="1576"/>
    </location>
</feature>
<feature type="region of interest" description="Disordered" evidence="4">
    <location>
        <begin position="1184"/>
        <end position="1576"/>
    </location>
</feature>
<feature type="coiled-coil region" evidence="3">
    <location>
        <begin position="293"/>
        <end position="339"/>
    </location>
</feature>
<feature type="coiled-coil region" evidence="3">
    <location>
        <begin position="896"/>
        <end position="965"/>
    </location>
</feature>
<feature type="coiled-coil region" evidence="3">
    <location>
        <begin position="1464"/>
        <end position="1491"/>
    </location>
</feature>
<feature type="short sequence motif" description="Nuclear localization signal" evidence="3">
    <location>
        <begin position="923"/>
        <end position="928"/>
    </location>
</feature>
<feature type="compositionally biased region" description="Basic and acidic residues" evidence="4">
    <location>
        <begin position="1218"/>
        <end position="1234"/>
    </location>
</feature>
<feature type="compositionally biased region" description="Low complexity" evidence="4">
    <location>
        <begin position="1251"/>
        <end position="1263"/>
    </location>
</feature>
<feature type="compositionally biased region" description="Basic and acidic residues" evidence="4">
    <location>
        <begin position="1265"/>
        <end position="1285"/>
    </location>
</feature>
<feature type="compositionally biased region" description="Basic and acidic residues" evidence="4">
    <location>
        <begin position="1294"/>
        <end position="1343"/>
    </location>
</feature>
<feature type="compositionally biased region" description="Basic and acidic residues" evidence="4">
    <location>
        <begin position="1353"/>
        <end position="1383"/>
    </location>
</feature>
<feature type="compositionally biased region" description="Polar residues" evidence="4">
    <location>
        <begin position="1416"/>
        <end position="1425"/>
    </location>
</feature>
<feature type="compositionally biased region" description="Basic and acidic residues" evidence="4">
    <location>
        <begin position="1449"/>
        <end position="1504"/>
    </location>
</feature>
<feature type="compositionally biased region" description="Basic and acidic residues" evidence="4">
    <location>
        <begin position="1524"/>
        <end position="1552"/>
    </location>
</feature>
<feature type="modified residue" description="Phosphoserine" evidence="1">
    <location>
        <position position="1222"/>
    </location>
</feature>
<feature type="modified residue" description="Phosphothreonine" evidence="2">
    <location>
        <position position="1385"/>
    </location>
</feature>
<feature type="modified residue" description="Phosphoserine" evidence="2">
    <location>
        <position position="1390"/>
    </location>
</feature>
<feature type="modified residue" description="Phosphoserine" evidence="2">
    <location>
        <position position="1393"/>
    </location>
</feature>
<feature type="modified residue" description="Phosphoserine" evidence="2">
    <location>
        <position position="1417"/>
    </location>
</feature>
<feature type="modified residue" description="Phosphothreonine" evidence="2">
    <location>
        <position position="1443"/>
    </location>
</feature>
<feature type="modified residue" description="Phosphoserine" evidence="2">
    <location>
        <position position="1450"/>
    </location>
</feature>
<feature type="modified residue" description="Phosphoserine" evidence="2">
    <location>
        <position position="1486"/>
    </location>
</feature>
<feature type="modified residue" description="Phosphoserine" evidence="2">
    <location>
        <position position="1516"/>
    </location>
</feature>
<sequence length="1576" mass="180807">MAAATVVLPVEWIKNWEKSGRGEFLHLCRILSENKNHDSSTYRDFQQALYELSYHVIKGNLKHEQASNVLNDISEFREDMPSILADVFCILDIETNCLEEKSKRDYFTQLVLACLYLVSDTVLKERLDPETLESLGLIKQSQQFNQKSVKIKTKLFYKQQKFNLLREENEGYAKLIAELGQDLSGNITSDLILENIKSLIGCFNLDPNRVLDVILEVFECRPEHDDFFISLLESYMSMCEPQTLCHILGFKFKFYQEPNGETPSSLYRVAAVLLQFNLIDLDDLYVHLLPADNCIMDEHKREIVEAKQIVRKLTMVVLSSEKIDEREKEKEKEEEKVEKPPDNQKLGLLEALLKIGDWQHAQNIMDQMPPYYAASHKLIALAICKLIHITIEPLYRRVGVPKGAKGSPVNALQNKRAPKQAESFEDLRRDVFNMFCYLGPHLSHDPILFAKVVRIGKSFMKEFQSDGSKQEDKEKTEVILSCLLSITDQVLLPSLSLMDCNACMSEELWGMFKTFPYQHRYRLYGQWKNETYNSHPLLVKVKAQTIDRAKYIMKRLTKENVKPSGRQIGKLSHSNPTILFDYILSQIQKYDNLITPVVDSLKYLTSLNYDVLAYCIIEALANPEKERMKHDDTTISSWLQSLASFCGAVFRKYPIDLAGLLQYVANQLKAGKSFDLLILKEVVQKMAGIEITEEMTMEQLEAMTGGEQLKAEGGYFGQIRNTKKSSQRLKDALLDHDLALPLCLLMAQQRNGVIFQEGGEKHLKLVGKLYDQCHDTLVQFGGFLASNLSTEDYIKRVPSIDVLCNEFHTPHDAAFFLSRPMYAHHISSKYDELKKSEKGSKQQHKVHKYITSCEMVMAPVHEAVVSLHVSKVWDDISPQFYATFWSLTMYDLAVPHTSYEREVNKLKVQMKAIDDNQEMPPNKKKKEKERCTALQDKLLEEEKKQMEHVQRVLQRLKLEKDNWLLAKSTKNETITKFLQLCIFPRCIFSAIDAVYCARFVELVHQQKTPNFSTLLCYDRVFSDIIYTVASCTENEASRYGRFLCCMLETVTRWHSDRATYEKECGNYPGFLTILRATGFDGGNKADQLDYENFRHVVHKWHYKLTKASVHCLETGEYTHIRNILIVLTKILPWYPKVLNLGQALERRVHKICQEEKEKRPDLYALAMGYFGQLKSRKSYMIPENEFHHKDPPPRNAAASVQNGPGGGPSSSAIGSASKSDESSTEETDKSRERSQCGVKAVNKASSATLKGNSSNGNSSSNSSKTVKENDKEKGKEKEKEKKEKTPATTPEARILGKDGKEKPKEERPNKDEKARETKERTPKSDKEKEKFKKEEKVKDEKFKTTVPNVESKSTQEKEREKEPSRERDIAKEMKSKENVKGGEKTPVSGSLKSPVPRSDIAEPEREQKRRKIDTHPSPSHSSTVKDSLIELKESSAKLYLNHTPPSLSKSKEREMDKKDLDKSRERSREREKKDEKDRKERKRDHSNNDREVPPDLTKRRKEENGTMGVSKHKSESPCESPYPNEKDKEKNKSKSSGKEKGGDSFKSEKMDKISSGGKKLFSLNLSSTHKSSDKHR</sequence>
<evidence type="ECO:0000250" key="1">
    <source>
        <dbReference type="UniProtKB" id="B1AZI6"/>
    </source>
</evidence>
<evidence type="ECO:0000250" key="2">
    <source>
        <dbReference type="UniProtKB" id="Q8NI27"/>
    </source>
</evidence>
<evidence type="ECO:0000255" key="3"/>
<evidence type="ECO:0000256" key="4">
    <source>
        <dbReference type="SAM" id="MobiDB-lite"/>
    </source>
</evidence>
<evidence type="ECO:0000305" key="5"/>
<accession>B2KI97</accession>
<comment type="function">
    <text evidence="2">Component of the THO subcomplex of the TREX complex which is thought to couple mRNA transcription, processing and nuclear export, and which specifically associates with spliced mRNA and not with unspliced pre-mRNA. Required for efficient export of polyadenylated RNA and spliced mRNA. The THOC1-THOC2-THOC3 core complex alone is sufficient to bind export factor NXF1-NXT1 and promote ATPase activity of DDX39B; in the complex THOC2 is the only component that directly interacts with DDX39B. TREX is recruited to spliced mRNAs by a transcription-independent mechanism, binds to mRNA upstream of the exon-junction complex (EJC) and is recruited in a splicing- and cap-dependent manner to a region near the 5' end of the mRNA where it functions in mRNA export to the cytoplasm via the TAP/NXF1 pathway. Required for NXF1 localization to the nuclear rim. THOC2 (and probably the THO complex) is involved in releasing mRNA from nuclear speckle domains. Plays a role for proper neuronal development.</text>
</comment>
<comment type="subunit">
    <text evidence="2">Component of the THO subcomplex, which is composed of THOC1, THOC2, THOC3, THOC5, THOC6 and THOC7. The THO subcomplex interacts with DDX39B to form the THO-DDX39B complex which multimerizes into a 28-subunit tetrameric assembly. Component of the transcription/export (TREX) complex at least composed of ALYREF/THOC4, DDX39B, SARNP/CIP29, CHTOP and the THO subcomplex; in the complex interacts with THOC1, THOC3, THOC5, THOC7 and DDX39B. TREX seems to have a dynamic structure involving ATP-dependent remodeling. Interacts with POLDIP3 and ZC3H11A (By similarity).</text>
</comment>
<comment type="subcellular location">
    <subcellularLocation>
        <location evidence="2">Nucleus</location>
    </subcellularLocation>
    <subcellularLocation>
        <location evidence="2">Nucleus speckle</location>
    </subcellularLocation>
    <subcellularLocation>
        <location evidence="2">Cytoplasm</location>
    </subcellularLocation>
</comment>
<comment type="similarity">
    <text evidence="5">Belongs to the THOC2 family.</text>
</comment>
<protein>
    <recommendedName>
        <fullName>THO complex subunit 2</fullName>
        <shortName>Tho2</shortName>
    </recommendedName>
</protein>
<dbReference type="EMBL" id="DP000717">
    <property type="protein sequence ID" value="ACC64557.1"/>
    <property type="molecule type" value="Genomic_DNA"/>
</dbReference>
<dbReference type="SMR" id="B2KI97"/>
<dbReference type="InParanoid" id="B2KI97"/>
<dbReference type="Proteomes" id="UP000472240">
    <property type="component" value="Unplaced"/>
</dbReference>
<dbReference type="GO" id="GO:0005737">
    <property type="term" value="C:cytoplasm"/>
    <property type="evidence" value="ECO:0000250"/>
    <property type="project" value="UniProtKB"/>
</dbReference>
<dbReference type="GO" id="GO:0016607">
    <property type="term" value="C:nuclear speck"/>
    <property type="evidence" value="ECO:0007669"/>
    <property type="project" value="UniProtKB-SubCell"/>
</dbReference>
<dbReference type="GO" id="GO:0005634">
    <property type="term" value="C:nucleus"/>
    <property type="evidence" value="ECO:0000250"/>
    <property type="project" value="UniProtKB"/>
</dbReference>
<dbReference type="GO" id="GO:0000445">
    <property type="term" value="C:THO complex part of transcription export complex"/>
    <property type="evidence" value="ECO:0007669"/>
    <property type="project" value="TreeGrafter"/>
</dbReference>
<dbReference type="GO" id="GO:0003729">
    <property type="term" value="F:mRNA binding"/>
    <property type="evidence" value="ECO:0007669"/>
    <property type="project" value="TreeGrafter"/>
</dbReference>
<dbReference type="GO" id="GO:0048699">
    <property type="term" value="P:generation of neurons"/>
    <property type="evidence" value="ECO:0000250"/>
    <property type="project" value="UniProtKB"/>
</dbReference>
<dbReference type="GO" id="GO:0006406">
    <property type="term" value="P:mRNA export from nucleus"/>
    <property type="evidence" value="ECO:0007669"/>
    <property type="project" value="InterPro"/>
</dbReference>
<dbReference type="GO" id="GO:0006397">
    <property type="term" value="P:mRNA processing"/>
    <property type="evidence" value="ECO:0007669"/>
    <property type="project" value="UniProtKB-KW"/>
</dbReference>
<dbReference type="GO" id="GO:0048666">
    <property type="term" value="P:neuron development"/>
    <property type="evidence" value="ECO:0000250"/>
    <property type="project" value="UniProtKB"/>
</dbReference>
<dbReference type="GO" id="GO:0008380">
    <property type="term" value="P:RNA splicing"/>
    <property type="evidence" value="ECO:0007669"/>
    <property type="project" value="UniProtKB-KW"/>
</dbReference>
<dbReference type="InterPro" id="IPR040007">
    <property type="entry name" value="Tho2"/>
</dbReference>
<dbReference type="InterPro" id="IPR021418">
    <property type="entry name" value="THO_THOC2_C"/>
</dbReference>
<dbReference type="InterPro" id="IPR021726">
    <property type="entry name" value="THO_THOC2_N"/>
</dbReference>
<dbReference type="InterPro" id="IPR032302">
    <property type="entry name" value="THOC2_N"/>
</dbReference>
<dbReference type="PANTHER" id="PTHR21597:SF0">
    <property type="entry name" value="THO COMPLEX SUBUNIT 2"/>
    <property type="match status" value="1"/>
</dbReference>
<dbReference type="PANTHER" id="PTHR21597">
    <property type="entry name" value="THO2 PROTEIN"/>
    <property type="match status" value="1"/>
</dbReference>
<dbReference type="Pfam" id="PF11262">
    <property type="entry name" value="Tho2"/>
    <property type="match status" value="1"/>
</dbReference>
<dbReference type="Pfam" id="PF11732">
    <property type="entry name" value="Thoc2"/>
    <property type="match status" value="1"/>
</dbReference>
<dbReference type="Pfam" id="PF16134">
    <property type="entry name" value="THOC2_N"/>
    <property type="match status" value="2"/>
</dbReference>
<keyword id="KW-0175">Coiled coil</keyword>
<keyword id="KW-0963">Cytoplasm</keyword>
<keyword id="KW-0507">mRNA processing</keyword>
<keyword id="KW-0508">mRNA splicing</keyword>
<keyword id="KW-0509">mRNA transport</keyword>
<keyword id="KW-0539">Nucleus</keyword>
<keyword id="KW-0597">Phosphoprotein</keyword>
<keyword id="KW-1185">Reference proteome</keyword>
<keyword id="KW-0694">RNA-binding</keyword>
<keyword id="KW-0813">Transport</keyword>
<organism>
    <name type="scientific">Rhinolophus ferrumequinum</name>
    <name type="common">Greater horseshoe bat</name>
    <dbReference type="NCBI Taxonomy" id="59479"/>
    <lineage>
        <taxon>Eukaryota</taxon>
        <taxon>Metazoa</taxon>
        <taxon>Chordata</taxon>
        <taxon>Craniata</taxon>
        <taxon>Vertebrata</taxon>
        <taxon>Euteleostomi</taxon>
        <taxon>Mammalia</taxon>
        <taxon>Eutheria</taxon>
        <taxon>Laurasiatheria</taxon>
        <taxon>Chiroptera</taxon>
        <taxon>Yinpterochiroptera</taxon>
        <taxon>Rhinolophoidea</taxon>
        <taxon>Rhinolophidae</taxon>
        <taxon>Rhinolophinae</taxon>
        <taxon>Rhinolophus</taxon>
    </lineage>
</organism>
<gene>
    <name type="primary">THOC2</name>
</gene>
<reference key="1">
    <citation type="submission" date="2008-04" db="EMBL/GenBank/DDBJ databases">
        <title>NISC comparative sequencing initiative.</title>
        <authorList>
            <person name="Antonellis A."/>
            <person name="Ayele K."/>
            <person name="Benjamin B."/>
            <person name="Blakesley R.W."/>
            <person name="Boakye A."/>
            <person name="Bouffard G.G."/>
            <person name="Brinkley C."/>
            <person name="Brooks S."/>
            <person name="Chu G."/>
            <person name="Coleman H."/>
            <person name="Engle J."/>
            <person name="Gestole M."/>
            <person name="Greene A."/>
            <person name="Guan X."/>
            <person name="Gupta J."/>
            <person name="Haghighi P."/>
            <person name="Han J."/>
            <person name="Hansen N."/>
            <person name="Ho S.-L."/>
            <person name="Hu P."/>
            <person name="Hunter G."/>
            <person name="Hurle B."/>
            <person name="Idol J.R."/>
            <person name="Kwong P."/>
            <person name="Laric P."/>
            <person name="Larson S."/>
            <person name="Lee-Lin S.-Q."/>
            <person name="Legaspi R."/>
            <person name="Madden M."/>
            <person name="Maduro Q.L."/>
            <person name="Maduro V.B."/>
            <person name="Margulies E.H."/>
            <person name="Masiello C."/>
            <person name="Maskeri B."/>
            <person name="McDowell J."/>
            <person name="Mojidi H.A."/>
            <person name="Mullikin J.C."/>
            <person name="Oestreicher J.S."/>
            <person name="Park M."/>
            <person name="Portnoy M.E."/>
            <person name="Prasad A."/>
            <person name="Puri O."/>
            <person name="Reddix-Dugue N."/>
            <person name="Schandler K."/>
            <person name="Schueler M.G."/>
            <person name="Sison C."/>
            <person name="Stantripop S."/>
            <person name="Stephen E."/>
            <person name="Taye A."/>
            <person name="Thomas J.W."/>
            <person name="Thomas P.J."/>
            <person name="Tsipouri V."/>
            <person name="Ung L."/>
            <person name="Vogt J.L."/>
            <person name="Wetherby K.D."/>
            <person name="Young A."/>
            <person name="Green E.D."/>
        </authorList>
    </citation>
    <scope>NUCLEOTIDE SEQUENCE [LARGE SCALE GENOMIC DNA]</scope>
</reference>
<name>THOC2_RHIFE</name>
<proteinExistence type="inferred from homology"/>